<reference key="1">
    <citation type="journal article" date="2002" name="J. Mol. Microbiol. Biotechnol.">
        <title>The genome of Methanosarcina mazei: evidence for lateral gene transfer between Bacteria and Archaea.</title>
        <authorList>
            <person name="Deppenmeier U."/>
            <person name="Johann A."/>
            <person name="Hartsch T."/>
            <person name="Merkl R."/>
            <person name="Schmitz R.A."/>
            <person name="Martinez-Arias R."/>
            <person name="Henne A."/>
            <person name="Wiezer A."/>
            <person name="Baeumer S."/>
            <person name="Jacobi C."/>
            <person name="Brueggemann H."/>
            <person name="Lienard T."/>
            <person name="Christmann A."/>
            <person name="Boemecke M."/>
            <person name="Steckel S."/>
            <person name="Bhattacharyya A."/>
            <person name="Lykidis A."/>
            <person name="Overbeek R."/>
            <person name="Klenk H.-P."/>
            <person name="Gunsalus R.P."/>
            <person name="Fritz H.-J."/>
            <person name="Gottschalk G."/>
        </authorList>
    </citation>
    <scope>NUCLEOTIDE SEQUENCE [LARGE SCALE GENOMIC DNA]</scope>
    <source>
        <strain>ATCC BAA-159 / DSM 3647 / Goe1 / Go1 / JCM 11833 / OCM 88</strain>
    </source>
</reference>
<evidence type="ECO:0000255" key="1">
    <source>
        <dbReference type="HAMAP-Rule" id="MF_00342"/>
    </source>
</evidence>
<organism>
    <name type="scientific">Methanosarcina mazei (strain ATCC BAA-159 / DSM 3647 / Goe1 / Go1 / JCM 11833 / OCM 88)</name>
    <name type="common">Methanosarcina frisia</name>
    <dbReference type="NCBI Taxonomy" id="192952"/>
    <lineage>
        <taxon>Archaea</taxon>
        <taxon>Methanobacteriati</taxon>
        <taxon>Methanobacteriota</taxon>
        <taxon>Stenosarchaea group</taxon>
        <taxon>Methanomicrobia</taxon>
        <taxon>Methanosarcinales</taxon>
        <taxon>Methanosarcinaceae</taxon>
        <taxon>Methanosarcina</taxon>
    </lineage>
</organism>
<protein>
    <recommendedName>
        <fullName evidence="1">UPF0147 protein MM_1385</fullName>
    </recommendedName>
</protein>
<name>Y1385_METMA</name>
<dbReference type="EMBL" id="AE008384">
    <property type="protein sequence ID" value="AAM31081.1"/>
    <property type="molecule type" value="Genomic_DNA"/>
</dbReference>
<dbReference type="SMR" id="Q8PX37"/>
<dbReference type="KEGG" id="mma:MM_1385"/>
<dbReference type="PATRIC" id="fig|192952.21.peg.1603"/>
<dbReference type="eggNOG" id="arCOG04308">
    <property type="taxonomic scope" value="Archaea"/>
</dbReference>
<dbReference type="HOGENOM" id="CLU_165882_1_0_2"/>
<dbReference type="Proteomes" id="UP000000595">
    <property type="component" value="Chromosome"/>
</dbReference>
<dbReference type="Gene3D" id="1.20.1440.50">
    <property type="entry name" value="Ta0600-like"/>
    <property type="match status" value="1"/>
</dbReference>
<dbReference type="HAMAP" id="MF_00342">
    <property type="entry name" value="UPF0147"/>
    <property type="match status" value="1"/>
</dbReference>
<dbReference type="InterPro" id="IPR023130">
    <property type="entry name" value="Ta0600-like_sf"/>
</dbReference>
<dbReference type="InterPro" id="IPR005354">
    <property type="entry name" value="UPF0147"/>
</dbReference>
<dbReference type="NCBIfam" id="NF003319">
    <property type="entry name" value="PRK04330.1"/>
    <property type="match status" value="1"/>
</dbReference>
<dbReference type="Pfam" id="PF03685">
    <property type="entry name" value="UPF0147"/>
    <property type="match status" value="1"/>
</dbReference>
<dbReference type="SUPFAM" id="SSF158436">
    <property type="entry name" value="Ta0600-like"/>
    <property type="match status" value="1"/>
</dbReference>
<comment type="similarity">
    <text evidence="1">Belongs to the UPF0147 family.</text>
</comment>
<sequence>MIQMSSNDSSEVIRQCLQVLESITSDSSVPRNIRRSVNEIMDILNNESEPLFLRAASSISILEDISNDPNLPLHTRTLIWNLSSQLETIPVDE</sequence>
<proteinExistence type="inferred from homology"/>
<accession>Q8PX37</accession>
<feature type="chain" id="PRO_0000150910" description="UPF0147 protein MM_1385">
    <location>
        <begin position="1"/>
        <end position="93"/>
    </location>
</feature>
<gene>
    <name type="ordered locus">MM_1385</name>
</gene>